<comment type="catalytic activity">
    <reaction>
        <text>tRNA(Phe) + L-phenylalanine + ATP = L-phenylalanyl-tRNA(Phe) + AMP + diphosphate + H(+)</text>
        <dbReference type="Rhea" id="RHEA:19413"/>
        <dbReference type="Rhea" id="RHEA-COMP:9668"/>
        <dbReference type="Rhea" id="RHEA-COMP:9699"/>
        <dbReference type="ChEBI" id="CHEBI:15378"/>
        <dbReference type="ChEBI" id="CHEBI:30616"/>
        <dbReference type="ChEBI" id="CHEBI:33019"/>
        <dbReference type="ChEBI" id="CHEBI:58095"/>
        <dbReference type="ChEBI" id="CHEBI:78442"/>
        <dbReference type="ChEBI" id="CHEBI:78531"/>
        <dbReference type="ChEBI" id="CHEBI:456215"/>
        <dbReference type="EC" id="6.1.1.20"/>
    </reaction>
</comment>
<comment type="cofactor">
    <cofactor evidence="1">
        <name>Mg(2+)</name>
        <dbReference type="ChEBI" id="CHEBI:18420"/>
    </cofactor>
    <text evidence="1">Binds 2 magnesium ions per tetramer.</text>
</comment>
<comment type="subunit">
    <text evidence="1">Tetramer of two alpha and two beta subunits.</text>
</comment>
<comment type="subcellular location">
    <subcellularLocation>
        <location evidence="1">Cytoplasm</location>
    </subcellularLocation>
</comment>
<comment type="similarity">
    <text evidence="2">Belongs to the class-II aminoacyl-tRNA synthetase family. Phe-tRNA synthetase alpha subunit type 1 subfamily.</text>
</comment>
<proteinExistence type="inferred from homology"/>
<reference key="1">
    <citation type="journal article" date="2002" name="J. Bacteriol.">
        <title>Whole-genome comparison of Mycobacterium tuberculosis clinical and laboratory strains.</title>
        <authorList>
            <person name="Fleischmann R.D."/>
            <person name="Alland D."/>
            <person name="Eisen J.A."/>
            <person name="Carpenter L."/>
            <person name="White O."/>
            <person name="Peterson J.D."/>
            <person name="DeBoy R.T."/>
            <person name="Dodson R.J."/>
            <person name="Gwinn M.L."/>
            <person name="Haft D.H."/>
            <person name="Hickey E.K."/>
            <person name="Kolonay J.F."/>
            <person name="Nelson W.C."/>
            <person name="Umayam L.A."/>
            <person name="Ermolaeva M.D."/>
            <person name="Salzberg S.L."/>
            <person name="Delcher A."/>
            <person name="Utterback T.R."/>
            <person name="Weidman J.F."/>
            <person name="Khouri H.M."/>
            <person name="Gill J."/>
            <person name="Mikula A."/>
            <person name="Bishai W."/>
            <person name="Jacobs W.R. Jr."/>
            <person name="Venter J.C."/>
            <person name="Fraser C.M."/>
        </authorList>
    </citation>
    <scope>NUCLEOTIDE SEQUENCE [LARGE SCALE GENOMIC DNA]</scope>
    <source>
        <strain>CDC 1551 / Oshkosh</strain>
    </source>
</reference>
<accession>P9WFU2</accession>
<accession>L0TA22</accession>
<accession>P94984</accession>
<evidence type="ECO:0000250" key="1"/>
<evidence type="ECO:0000305" key="2"/>
<organism>
    <name type="scientific">Mycobacterium tuberculosis (strain CDC 1551 / Oshkosh)</name>
    <dbReference type="NCBI Taxonomy" id="83331"/>
    <lineage>
        <taxon>Bacteria</taxon>
        <taxon>Bacillati</taxon>
        <taxon>Actinomycetota</taxon>
        <taxon>Actinomycetes</taxon>
        <taxon>Mycobacteriales</taxon>
        <taxon>Mycobacteriaceae</taxon>
        <taxon>Mycobacterium</taxon>
        <taxon>Mycobacterium tuberculosis complex</taxon>
    </lineage>
</organism>
<name>SYFA_MYCTO</name>
<keyword id="KW-0030">Aminoacyl-tRNA synthetase</keyword>
<keyword id="KW-0067">ATP-binding</keyword>
<keyword id="KW-0963">Cytoplasm</keyword>
<keyword id="KW-0436">Ligase</keyword>
<keyword id="KW-0460">Magnesium</keyword>
<keyword id="KW-0479">Metal-binding</keyword>
<keyword id="KW-0547">Nucleotide-binding</keyword>
<keyword id="KW-0648">Protein biosynthesis</keyword>
<keyword id="KW-1185">Reference proteome</keyword>
<gene>
    <name type="primary">pheS</name>
    <name type="ordered locus">MT1687</name>
</gene>
<dbReference type="EC" id="6.1.1.20"/>
<dbReference type="EMBL" id="AE000516">
    <property type="protein sequence ID" value="AAK45956.1"/>
    <property type="molecule type" value="Genomic_DNA"/>
</dbReference>
<dbReference type="PIR" id="D70620">
    <property type="entry name" value="D70620"/>
</dbReference>
<dbReference type="SMR" id="P9WFU2"/>
<dbReference type="KEGG" id="mtc:MT1687"/>
<dbReference type="PATRIC" id="fig|83331.31.peg.1813"/>
<dbReference type="HOGENOM" id="CLU_025086_0_0_11"/>
<dbReference type="Proteomes" id="UP000001020">
    <property type="component" value="Chromosome"/>
</dbReference>
<dbReference type="GO" id="GO:0005737">
    <property type="term" value="C:cytoplasm"/>
    <property type="evidence" value="ECO:0007669"/>
    <property type="project" value="UniProtKB-SubCell"/>
</dbReference>
<dbReference type="GO" id="GO:0005524">
    <property type="term" value="F:ATP binding"/>
    <property type="evidence" value="ECO:0007669"/>
    <property type="project" value="UniProtKB-UniRule"/>
</dbReference>
<dbReference type="GO" id="GO:0000287">
    <property type="term" value="F:magnesium ion binding"/>
    <property type="evidence" value="ECO:0007669"/>
    <property type="project" value="UniProtKB-UniRule"/>
</dbReference>
<dbReference type="GO" id="GO:0004826">
    <property type="term" value="F:phenylalanine-tRNA ligase activity"/>
    <property type="evidence" value="ECO:0007669"/>
    <property type="project" value="UniProtKB-UniRule"/>
</dbReference>
<dbReference type="GO" id="GO:0000049">
    <property type="term" value="F:tRNA binding"/>
    <property type="evidence" value="ECO:0007669"/>
    <property type="project" value="InterPro"/>
</dbReference>
<dbReference type="GO" id="GO:0006432">
    <property type="term" value="P:phenylalanyl-tRNA aminoacylation"/>
    <property type="evidence" value="ECO:0007669"/>
    <property type="project" value="UniProtKB-UniRule"/>
</dbReference>
<dbReference type="CDD" id="cd00496">
    <property type="entry name" value="PheRS_alpha_core"/>
    <property type="match status" value="1"/>
</dbReference>
<dbReference type="FunFam" id="3.30.930.10:FF:000003">
    <property type="entry name" value="Phenylalanine--tRNA ligase alpha subunit"/>
    <property type="match status" value="1"/>
</dbReference>
<dbReference type="Gene3D" id="3.30.930.10">
    <property type="entry name" value="Bira Bifunctional Protein, Domain 2"/>
    <property type="match status" value="1"/>
</dbReference>
<dbReference type="HAMAP" id="MF_00281">
    <property type="entry name" value="Phe_tRNA_synth_alpha1"/>
    <property type="match status" value="1"/>
</dbReference>
<dbReference type="InterPro" id="IPR006195">
    <property type="entry name" value="aa-tRNA-synth_II"/>
</dbReference>
<dbReference type="InterPro" id="IPR045864">
    <property type="entry name" value="aa-tRNA-synth_II/BPL/LPL"/>
</dbReference>
<dbReference type="InterPro" id="IPR004529">
    <property type="entry name" value="Phe-tRNA-synth_IIc_asu"/>
</dbReference>
<dbReference type="InterPro" id="IPR004188">
    <property type="entry name" value="Phe-tRNA_ligase_II_N"/>
</dbReference>
<dbReference type="InterPro" id="IPR022911">
    <property type="entry name" value="Phe_tRNA_ligase_alpha1_bac"/>
</dbReference>
<dbReference type="InterPro" id="IPR002319">
    <property type="entry name" value="Phenylalanyl-tRNA_Synthase"/>
</dbReference>
<dbReference type="InterPro" id="IPR010978">
    <property type="entry name" value="tRNA-bd_arm"/>
</dbReference>
<dbReference type="NCBIfam" id="TIGR00468">
    <property type="entry name" value="pheS"/>
    <property type="match status" value="1"/>
</dbReference>
<dbReference type="PANTHER" id="PTHR11538:SF41">
    <property type="entry name" value="PHENYLALANINE--TRNA LIGASE, MITOCHONDRIAL"/>
    <property type="match status" value="1"/>
</dbReference>
<dbReference type="PANTHER" id="PTHR11538">
    <property type="entry name" value="PHENYLALANYL-TRNA SYNTHETASE"/>
    <property type="match status" value="1"/>
</dbReference>
<dbReference type="Pfam" id="PF02912">
    <property type="entry name" value="Phe_tRNA-synt_N"/>
    <property type="match status" value="1"/>
</dbReference>
<dbReference type="Pfam" id="PF01409">
    <property type="entry name" value="tRNA-synt_2d"/>
    <property type="match status" value="1"/>
</dbReference>
<dbReference type="SUPFAM" id="SSF55681">
    <property type="entry name" value="Class II aaRS and biotin synthetases"/>
    <property type="match status" value="1"/>
</dbReference>
<dbReference type="SUPFAM" id="SSF46589">
    <property type="entry name" value="tRNA-binding arm"/>
    <property type="match status" value="1"/>
</dbReference>
<dbReference type="PROSITE" id="PS50862">
    <property type="entry name" value="AA_TRNA_LIGASE_II"/>
    <property type="match status" value="1"/>
</dbReference>
<protein>
    <recommendedName>
        <fullName>Phenylalanine--tRNA ligase alpha subunit</fullName>
        <ecNumber>6.1.1.20</ecNumber>
    </recommendedName>
    <alternativeName>
        <fullName>Phenylalanyl-tRNA synthetase alpha subunit</fullName>
        <shortName>PheRS</shortName>
    </alternativeName>
</protein>
<feature type="chain" id="PRO_0000428477" description="Phenylalanine--tRNA ligase alpha subunit">
    <location>
        <begin position="1"/>
        <end position="341"/>
    </location>
</feature>
<feature type="binding site" evidence="1">
    <location>
        <position position="259"/>
    </location>
    <ligand>
        <name>Mg(2+)</name>
        <dbReference type="ChEBI" id="CHEBI:18420"/>
        <note>shared with beta subunit</note>
    </ligand>
</feature>
<sequence>MLSPEALTTAVDAAQQAIALADTLDVLARVKTEHLGDRSPLALARQALAVLPKEQRAEAGKRVNAARNAAQRSYDERLATLRAERDAAVLVAEGIDVTLPSTRVPAGARHPIIMLAEHVADTFIAMGWELAEGPEVETEQFNFDALNFPADHPARGEQDTFYIAPEDSRQLLRTHTSPVQIRTLLARELPVYIISIGRTFRTDELDATHTPIFHQVEGLAVDRGLSMAHLRGTLDAFARAEFGPSARTRIRPHFFPFTEPSAEVDVWFANKIGGAAWVEWGGCGMVHPNVLRATGIDPDLYSGFAFGMGLERTLQFRNGIPDMRDMVEGDVRFSLPFGVGA</sequence>